<name>ANMK_VIBCH</name>
<sequence>MAERELYIGVMSGTSLDGVDTALVALQDDNIELLAHHDYPIPADLKQRLLNVCIGQPTTLIAMGELEHDLGHLFSDAVLALLQHSGYRAEHIRAIGCHGQTVFHQPTGTKPFTMQIGDANIIATRTGITTVADFRRKDVALGGQGAPLVPAFHRTIFHAEQSTVVVLNIGGIANISVLKPNGEVVGYDTGPGNMLMDSWCQKERNQPYDKDALWAKQGSVNAALLSHLKQDHYFALPAPKSTGRELFNLPWLETQLATFSVDATDVQRTLCEFTAQTIVEQVAPFAEGPQPQLLVCGGGAQNPLLMERLQALLPSWQVAPTTQMGVDGDNMEAMAFAWLAQRRIHGLPSNLPAVTGASRLASLGVIYYPD</sequence>
<keyword id="KW-0067">ATP-binding</keyword>
<keyword id="KW-0119">Carbohydrate metabolism</keyword>
<keyword id="KW-0418">Kinase</keyword>
<keyword id="KW-0547">Nucleotide-binding</keyword>
<keyword id="KW-1185">Reference proteome</keyword>
<keyword id="KW-0808">Transferase</keyword>
<protein>
    <recommendedName>
        <fullName evidence="1">Anhydro-N-acetylmuramic acid kinase</fullName>
        <ecNumber evidence="1">2.7.1.170</ecNumber>
    </recommendedName>
    <alternativeName>
        <fullName evidence="1">AnhMurNAc kinase</fullName>
    </alternativeName>
</protein>
<reference key="1">
    <citation type="journal article" date="2000" name="Nature">
        <title>DNA sequence of both chromosomes of the cholera pathogen Vibrio cholerae.</title>
        <authorList>
            <person name="Heidelberg J.F."/>
            <person name="Eisen J.A."/>
            <person name="Nelson W.C."/>
            <person name="Clayton R.A."/>
            <person name="Gwinn M.L."/>
            <person name="Dodson R.J."/>
            <person name="Haft D.H."/>
            <person name="Hickey E.K."/>
            <person name="Peterson J.D."/>
            <person name="Umayam L.A."/>
            <person name="Gill S.R."/>
            <person name="Nelson K.E."/>
            <person name="Read T.D."/>
            <person name="Tettelin H."/>
            <person name="Richardson D.L."/>
            <person name="Ermolaeva M.D."/>
            <person name="Vamathevan J.J."/>
            <person name="Bass S."/>
            <person name="Qin H."/>
            <person name="Dragoi I."/>
            <person name="Sellers P."/>
            <person name="McDonald L.A."/>
            <person name="Utterback T.R."/>
            <person name="Fleischmann R.D."/>
            <person name="Nierman W.C."/>
            <person name="White O."/>
            <person name="Salzberg S.L."/>
            <person name="Smith H.O."/>
            <person name="Colwell R.R."/>
            <person name="Mekalanos J.J."/>
            <person name="Venter J.C."/>
            <person name="Fraser C.M."/>
        </authorList>
    </citation>
    <scope>NUCLEOTIDE SEQUENCE [LARGE SCALE GENOMIC DNA]</scope>
    <source>
        <strain>ATCC 39315 / El Tor Inaba N16961</strain>
    </source>
</reference>
<proteinExistence type="inferred from homology"/>
<evidence type="ECO:0000255" key="1">
    <source>
        <dbReference type="HAMAP-Rule" id="MF_01270"/>
    </source>
</evidence>
<comment type="function">
    <text evidence="1">Catalyzes the specific phosphorylation of 1,6-anhydro-N-acetylmuramic acid (anhMurNAc) with the simultaneous cleavage of the 1,6-anhydro ring, generating MurNAc-6-P. Is required for the utilization of anhMurNAc either imported from the medium or derived from its own cell wall murein, and thus plays a role in cell wall recycling.</text>
</comment>
<comment type="catalytic activity">
    <reaction evidence="1">
        <text>1,6-anhydro-N-acetyl-beta-muramate + ATP + H2O = N-acetyl-D-muramate 6-phosphate + ADP + H(+)</text>
        <dbReference type="Rhea" id="RHEA:24952"/>
        <dbReference type="ChEBI" id="CHEBI:15377"/>
        <dbReference type="ChEBI" id="CHEBI:15378"/>
        <dbReference type="ChEBI" id="CHEBI:30616"/>
        <dbReference type="ChEBI" id="CHEBI:58690"/>
        <dbReference type="ChEBI" id="CHEBI:58722"/>
        <dbReference type="ChEBI" id="CHEBI:456216"/>
        <dbReference type="EC" id="2.7.1.170"/>
    </reaction>
</comment>
<comment type="pathway">
    <text evidence="1">Amino-sugar metabolism; 1,6-anhydro-N-acetylmuramate degradation.</text>
</comment>
<comment type="pathway">
    <text evidence="1">Cell wall biogenesis; peptidoglycan recycling.</text>
</comment>
<comment type="similarity">
    <text evidence="1">Belongs to the anhydro-N-acetylmuramic acid kinase family.</text>
</comment>
<gene>
    <name evidence="1" type="primary">anmK</name>
    <name type="ordered locus">VC_0691</name>
</gene>
<organism>
    <name type="scientific">Vibrio cholerae serotype O1 (strain ATCC 39315 / El Tor Inaba N16961)</name>
    <dbReference type="NCBI Taxonomy" id="243277"/>
    <lineage>
        <taxon>Bacteria</taxon>
        <taxon>Pseudomonadati</taxon>
        <taxon>Pseudomonadota</taxon>
        <taxon>Gammaproteobacteria</taxon>
        <taxon>Vibrionales</taxon>
        <taxon>Vibrionaceae</taxon>
        <taxon>Vibrio</taxon>
    </lineage>
</organism>
<feature type="chain" id="PRO_0000250078" description="Anhydro-N-acetylmuramic acid kinase">
    <location>
        <begin position="1"/>
        <end position="370"/>
    </location>
</feature>
<feature type="binding site" evidence="1">
    <location>
        <begin position="13"/>
        <end position="20"/>
    </location>
    <ligand>
        <name>ATP</name>
        <dbReference type="ChEBI" id="CHEBI:30616"/>
    </ligand>
</feature>
<accession>Q9KU38</accession>
<dbReference type="EC" id="2.7.1.170" evidence="1"/>
<dbReference type="EMBL" id="AE003852">
    <property type="protein sequence ID" value="AAF93856.1"/>
    <property type="molecule type" value="Genomic_DNA"/>
</dbReference>
<dbReference type="PIR" id="H82291">
    <property type="entry name" value="H82291"/>
</dbReference>
<dbReference type="RefSeq" id="NP_230340.1">
    <property type="nucleotide sequence ID" value="NC_002505.1"/>
</dbReference>
<dbReference type="RefSeq" id="WP_000840717.1">
    <property type="nucleotide sequence ID" value="NZ_LT906614.1"/>
</dbReference>
<dbReference type="SMR" id="Q9KU38"/>
<dbReference type="STRING" id="243277.VC_0691"/>
<dbReference type="DNASU" id="2615480"/>
<dbReference type="EnsemblBacteria" id="AAF93856">
    <property type="protein sequence ID" value="AAF93856"/>
    <property type="gene ID" value="VC_0691"/>
</dbReference>
<dbReference type="KEGG" id="vch:VC_0691"/>
<dbReference type="PATRIC" id="fig|243277.26.peg.662"/>
<dbReference type="eggNOG" id="COG2377">
    <property type="taxonomic scope" value="Bacteria"/>
</dbReference>
<dbReference type="HOGENOM" id="CLU_038782_0_0_6"/>
<dbReference type="UniPathway" id="UPA00343"/>
<dbReference type="UniPathway" id="UPA00544"/>
<dbReference type="Proteomes" id="UP000000584">
    <property type="component" value="Chromosome 1"/>
</dbReference>
<dbReference type="GO" id="GO:0005524">
    <property type="term" value="F:ATP binding"/>
    <property type="evidence" value="ECO:0007669"/>
    <property type="project" value="UniProtKB-UniRule"/>
</dbReference>
<dbReference type="GO" id="GO:0016301">
    <property type="term" value="F:kinase activity"/>
    <property type="evidence" value="ECO:0000318"/>
    <property type="project" value="GO_Central"/>
</dbReference>
<dbReference type="GO" id="GO:0016773">
    <property type="term" value="F:phosphotransferase activity, alcohol group as acceptor"/>
    <property type="evidence" value="ECO:0007669"/>
    <property type="project" value="UniProtKB-UniRule"/>
</dbReference>
<dbReference type="GO" id="GO:0097175">
    <property type="term" value="P:1,6-anhydro-N-acetyl-beta-muramic acid catabolic process"/>
    <property type="evidence" value="ECO:0007669"/>
    <property type="project" value="UniProtKB-UniRule"/>
</dbReference>
<dbReference type="GO" id="GO:0006040">
    <property type="term" value="P:amino sugar metabolic process"/>
    <property type="evidence" value="ECO:0007669"/>
    <property type="project" value="InterPro"/>
</dbReference>
<dbReference type="GO" id="GO:0009254">
    <property type="term" value="P:peptidoglycan turnover"/>
    <property type="evidence" value="ECO:0007669"/>
    <property type="project" value="UniProtKB-UniRule"/>
</dbReference>
<dbReference type="CDD" id="cd24050">
    <property type="entry name" value="ASKHA_NBD_ANMK"/>
    <property type="match status" value="1"/>
</dbReference>
<dbReference type="Gene3D" id="3.30.420.40">
    <property type="match status" value="2"/>
</dbReference>
<dbReference type="HAMAP" id="MF_01270">
    <property type="entry name" value="AnhMurNAc_kinase"/>
    <property type="match status" value="1"/>
</dbReference>
<dbReference type="InterPro" id="IPR005338">
    <property type="entry name" value="Anhydro_N_Ac-Mur_kinase"/>
</dbReference>
<dbReference type="InterPro" id="IPR043129">
    <property type="entry name" value="ATPase_NBD"/>
</dbReference>
<dbReference type="NCBIfam" id="NF007139">
    <property type="entry name" value="PRK09585.1-3"/>
    <property type="match status" value="1"/>
</dbReference>
<dbReference type="NCBIfam" id="NF007148">
    <property type="entry name" value="PRK09585.3-2"/>
    <property type="match status" value="1"/>
</dbReference>
<dbReference type="PANTHER" id="PTHR30605">
    <property type="entry name" value="ANHYDRO-N-ACETYLMURAMIC ACID KINASE"/>
    <property type="match status" value="1"/>
</dbReference>
<dbReference type="PANTHER" id="PTHR30605:SF0">
    <property type="entry name" value="ANHYDRO-N-ACETYLMURAMIC ACID KINASE"/>
    <property type="match status" value="1"/>
</dbReference>
<dbReference type="Pfam" id="PF03702">
    <property type="entry name" value="AnmK"/>
    <property type="match status" value="1"/>
</dbReference>
<dbReference type="SUPFAM" id="SSF53067">
    <property type="entry name" value="Actin-like ATPase domain"/>
    <property type="match status" value="1"/>
</dbReference>